<keyword id="KW-0413">Isomerase</keyword>
<feature type="chain" id="PRO_1000097643" description="Ribose-5-phosphate isomerase A">
    <location>
        <begin position="1"/>
        <end position="219"/>
    </location>
</feature>
<feature type="active site" description="Proton acceptor" evidence="1">
    <location>
        <position position="103"/>
    </location>
</feature>
<feature type="binding site" evidence="1">
    <location>
        <begin position="28"/>
        <end position="31"/>
    </location>
    <ligand>
        <name>substrate</name>
    </ligand>
</feature>
<feature type="binding site" evidence="1">
    <location>
        <begin position="81"/>
        <end position="84"/>
    </location>
    <ligand>
        <name>substrate</name>
    </ligand>
</feature>
<feature type="binding site" evidence="1">
    <location>
        <begin position="94"/>
        <end position="97"/>
    </location>
    <ligand>
        <name>substrate</name>
    </ligand>
</feature>
<feature type="binding site" evidence="1">
    <location>
        <position position="121"/>
    </location>
    <ligand>
        <name>substrate</name>
    </ligand>
</feature>
<accession>B3H285</accession>
<proteinExistence type="inferred from homology"/>
<organism>
    <name type="scientific">Actinobacillus pleuropneumoniae serotype 7 (strain AP76)</name>
    <dbReference type="NCBI Taxonomy" id="537457"/>
    <lineage>
        <taxon>Bacteria</taxon>
        <taxon>Pseudomonadati</taxon>
        <taxon>Pseudomonadota</taxon>
        <taxon>Gammaproteobacteria</taxon>
        <taxon>Pasteurellales</taxon>
        <taxon>Pasteurellaceae</taxon>
        <taxon>Actinobacillus</taxon>
    </lineage>
</organism>
<comment type="function">
    <text evidence="1">Catalyzes the reversible conversion of ribose-5-phosphate to ribulose 5-phosphate.</text>
</comment>
<comment type="catalytic activity">
    <reaction evidence="1">
        <text>aldehydo-D-ribose 5-phosphate = D-ribulose 5-phosphate</text>
        <dbReference type="Rhea" id="RHEA:14657"/>
        <dbReference type="ChEBI" id="CHEBI:58121"/>
        <dbReference type="ChEBI" id="CHEBI:58273"/>
        <dbReference type="EC" id="5.3.1.6"/>
    </reaction>
</comment>
<comment type="pathway">
    <text evidence="1">Carbohydrate degradation; pentose phosphate pathway; D-ribose 5-phosphate from D-ribulose 5-phosphate (non-oxidative stage): step 1/1.</text>
</comment>
<comment type="subunit">
    <text evidence="1">Homodimer.</text>
</comment>
<comment type="similarity">
    <text evidence="1">Belongs to the ribose 5-phosphate isomerase family.</text>
</comment>
<name>RPIA_ACTP7</name>
<gene>
    <name evidence="1" type="primary">rpiA</name>
    <name type="ordered locus">APP7_1458</name>
</gene>
<evidence type="ECO:0000255" key="1">
    <source>
        <dbReference type="HAMAP-Rule" id="MF_00170"/>
    </source>
</evidence>
<reference key="1">
    <citation type="submission" date="2008-06" db="EMBL/GenBank/DDBJ databases">
        <title>Genome and proteome analysis of A. pleuropneumoniae serotype 7.</title>
        <authorList>
            <person name="Linke B."/>
            <person name="Buettner F."/>
            <person name="Martinez-Arias R."/>
            <person name="Goesmann A."/>
            <person name="Baltes N."/>
            <person name="Tegetmeyer H."/>
            <person name="Singh M."/>
            <person name="Gerlach G.F."/>
        </authorList>
    </citation>
    <scope>NUCLEOTIDE SEQUENCE [LARGE SCALE GENOMIC DNA]</scope>
    <source>
        <strain>AP76</strain>
    </source>
</reference>
<dbReference type="EC" id="5.3.1.6" evidence="1"/>
<dbReference type="EMBL" id="CP001091">
    <property type="protein sequence ID" value="ACE62110.1"/>
    <property type="molecule type" value="Genomic_DNA"/>
</dbReference>
<dbReference type="RefSeq" id="WP_005598674.1">
    <property type="nucleotide sequence ID" value="NC_010939.1"/>
</dbReference>
<dbReference type="SMR" id="B3H285"/>
<dbReference type="GeneID" id="48599698"/>
<dbReference type="KEGG" id="apa:APP7_1458"/>
<dbReference type="HOGENOM" id="CLU_056590_1_1_6"/>
<dbReference type="UniPathway" id="UPA00115">
    <property type="reaction ID" value="UER00412"/>
</dbReference>
<dbReference type="Proteomes" id="UP000001226">
    <property type="component" value="Chromosome"/>
</dbReference>
<dbReference type="GO" id="GO:0005829">
    <property type="term" value="C:cytosol"/>
    <property type="evidence" value="ECO:0007669"/>
    <property type="project" value="TreeGrafter"/>
</dbReference>
<dbReference type="GO" id="GO:0004751">
    <property type="term" value="F:ribose-5-phosphate isomerase activity"/>
    <property type="evidence" value="ECO:0007669"/>
    <property type="project" value="UniProtKB-UniRule"/>
</dbReference>
<dbReference type="GO" id="GO:0006014">
    <property type="term" value="P:D-ribose metabolic process"/>
    <property type="evidence" value="ECO:0007669"/>
    <property type="project" value="TreeGrafter"/>
</dbReference>
<dbReference type="GO" id="GO:0009052">
    <property type="term" value="P:pentose-phosphate shunt, non-oxidative branch"/>
    <property type="evidence" value="ECO:0007669"/>
    <property type="project" value="UniProtKB-UniRule"/>
</dbReference>
<dbReference type="CDD" id="cd01398">
    <property type="entry name" value="RPI_A"/>
    <property type="match status" value="1"/>
</dbReference>
<dbReference type="FunFam" id="3.30.70.260:FF:000004">
    <property type="entry name" value="Ribose-5-phosphate isomerase A"/>
    <property type="match status" value="1"/>
</dbReference>
<dbReference type="FunFam" id="3.40.50.1360:FF:000001">
    <property type="entry name" value="Ribose-5-phosphate isomerase A"/>
    <property type="match status" value="1"/>
</dbReference>
<dbReference type="Gene3D" id="3.30.70.260">
    <property type="match status" value="1"/>
</dbReference>
<dbReference type="Gene3D" id="3.40.50.1360">
    <property type="match status" value="1"/>
</dbReference>
<dbReference type="HAMAP" id="MF_00170">
    <property type="entry name" value="Rib_5P_isom_A"/>
    <property type="match status" value="1"/>
</dbReference>
<dbReference type="InterPro" id="IPR037171">
    <property type="entry name" value="NagB/RpiA_transferase-like"/>
</dbReference>
<dbReference type="InterPro" id="IPR020672">
    <property type="entry name" value="Ribose5P_isomerase_typA_subgr"/>
</dbReference>
<dbReference type="InterPro" id="IPR004788">
    <property type="entry name" value="Ribose5P_isomerase_type_A"/>
</dbReference>
<dbReference type="NCBIfam" id="NF001924">
    <property type="entry name" value="PRK00702.1"/>
    <property type="match status" value="1"/>
</dbReference>
<dbReference type="NCBIfam" id="TIGR00021">
    <property type="entry name" value="rpiA"/>
    <property type="match status" value="1"/>
</dbReference>
<dbReference type="PANTHER" id="PTHR11934">
    <property type="entry name" value="RIBOSE-5-PHOSPHATE ISOMERASE"/>
    <property type="match status" value="1"/>
</dbReference>
<dbReference type="PANTHER" id="PTHR11934:SF0">
    <property type="entry name" value="RIBOSE-5-PHOSPHATE ISOMERASE"/>
    <property type="match status" value="1"/>
</dbReference>
<dbReference type="Pfam" id="PF06026">
    <property type="entry name" value="Rib_5-P_isom_A"/>
    <property type="match status" value="1"/>
</dbReference>
<dbReference type="SUPFAM" id="SSF75445">
    <property type="entry name" value="D-ribose-5-phosphate isomerase (RpiA), lid domain"/>
    <property type="match status" value="1"/>
</dbReference>
<dbReference type="SUPFAM" id="SSF100950">
    <property type="entry name" value="NagB/RpiA/CoA transferase-like"/>
    <property type="match status" value="1"/>
</dbReference>
<protein>
    <recommendedName>
        <fullName evidence="1">Ribose-5-phosphate isomerase A</fullName>
        <ecNumber evidence="1">5.3.1.6</ecNumber>
    </recommendedName>
    <alternativeName>
        <fullName evidence="1">Phosphoriboisomerase A</fullName>
        <shortName evidence="1">PRI</shortName>
    </alternativeName>
</protein>
<sequence length="219" mass="23255">MTQQEMKKIAAQAALQFVKPDTIVGVGSGSTVNCFIDALASMKDQIKGAVAASKASEERLRAIGIEVFNANEVSELDVYIDGADEITPQGAMIKGGGAALTREKIVSSLAKKFVCIVDGSKQVDVLGTTFPLPVEVIPMARSYVARQLVALGGSPEYREGVVTDNGNVILDVHNFHIIEPLKMEHTINNIAGVVTNGIFAQRYANVTIVGTPEGAKIIE</sequence>